<keyword id="KW-0687">Ribonucleoprotein</keyword>
<keyword id="KW-0689">Ribosomal protein</keyword>
<gene>
    <name evidence="1" type="primary">rpmA</name>
    <name type="ordered locus">PFL_5328</name>
</gene>
<name>RL27_PSEF5</name>
<proteinExistence type="inferred from homology"/>
<organism>
    <name type="scientific">Pseudomonas fluorescens (strain ATCC BAA-477 / NRRL B-23932 / Pf-5)</name>
    <dbReference type="NCBI Taxonomy" id="220664"/>
    <lineage>
        <taxon>Bacteria</taxon>
        <taxon>Pseudomonadati</taxon>
        <taxon>Pseudomonadota</taxon>
        <taxon>Gammaproteobacteria</taxon>
        <taxon>Pseudomonadales</taxon>
        <taxon>Pseudomonadaceae</taxon>
        <taxon>Pseudomonas</taxon>
    </lineage>
</organism>
<sequence>MAHKKAGGSTRNGRDSEAKRLGVKMYGGQVIKAGNIIVRQRGTQFHAGYGVGMGKDHTLFAKIEGVIKFEVKGAFGRRYVSVVAA</sequence>
<reference key="1">
    <citation type="journal article" date="2005" name="Nat. Biotechnol.">
        <title>Complete genome sequence of the plant commensal Pseudomonas fluorescens Pf-5.</title>
        <authorList>
            <person name="Paulsen I.T."/>
            <person name="Press C.M."/>
            <person name="Ravel J."/>
            <person name="Kobayashi D.Y."/>
            <person name="Myers G.S.A."/>
            <person name="Mavrodi D.V."/>
            <person name="DeBoy R.T."/>
            <person name="Seshadri R."/>
            <person name="Ren Q."/>
            <person name="Madupu R."/>
            <person name="Dodson R.J."/>
            <person name="Durkin A.S."/>
            <person name="Brinkac L.M."/>
            <person name="Daugherty S.C."/>
            <person name="Sullivan S.A."/>
            <person name="Rosovitz M.J."/>
            <person name="Gwinn M.L."/>
            <person name="Zhou L."/>
            <person name="Schneider D.J."/>
            <person name="Cartinhour S.W."/>
            <person name="Nelson W.C."/>
            <person name="Weidman J."/>
            <person name="Watkins K."/>
            <person name="Tran K."/>
            <person name="Khouri H."/>
            <person name="Pierson E.A."/>
            <person name="Pierson L.S. III"/>
            <person name="Thomashow L.S."/>
            <person name="Loper J.E."/>
        </authorList>
    </citation>
    <scope>NUCLEOTIDE SEQUENCE [LARGE SCALE GENOMIC DNA]</scope>
    <source>
        <strain>ATCC BAA-477 / NRRL B-23932 / Pf-5</strain>
    </source>
</reference>
<evidence type="ECO:0000255" key="1">
    <source>
        <dbReference type="HAMAP-Rule" id="MF_00539"/>
    </source>
</evidence>
<evidence type="ECO:0000305" key="2"/>
<dbReference type="EMBL" id="CP000076">
    <property type="protein sequence ID" value="AAY94538.1"/>
    <property type="molecule type" value="Genomic_DNA"/>
</dbReference>
<dbReference type="RefSeq" id="WP_003228360.1">
    <property type="nucleotide sequence ID" value="NC_004129.6"/>
</dbReference>
<dbReference type="SMR" id="Q4K5T7"/>
<dbReference type="STRING" id="220664.PFL_5328"/>
<dbReference type="GeneID" id="93491193"/>
<dbReference type="KEGG" id="pfl:PFL_5328"/>
<dbReference type="eggNOG" id="COG0211">
    <property type="taxonomic scope" value="Bacteria"/>
</dbReference>
<dbReference type="HOGENOM" id="CLU_095424_4_1_6"/>
<dbReference type="Proteomes" id="UP000008540">
    <property type="component" value="Chromosome"/>
</dbReference>
<dbReference type="GO" id="GO:0022625">
    <property type="term" value="C:cytosolic large ribosomal subunit"/>
    <property type="evidence" value="ECO:0007669"/>
    <property type="project" value="TreeGrafter"/>
</dbReference>
<dbReference type="GO" id="GO:0003735">
    <property type="term" value="F:structural constituent of ribosome"/>
    <property type="evidence" value="ECO:0007669"/>
    <property type="project" value="InterPro"/>
</dbReference>
<dbReference type="GO" id="GO:0006412">
    <property type="term" value="P:translation"/>
    <property type="evidence" value="ECO:0007669"/>
    <property type="project" value="UniProtKB-UniRule"/>
</dbReference>
<dbReference type="FunFam" id="2.40.50.100:FF:000001">
    <property type="entry name" value="50S ribosomal protein L27"/>
    <property type="match status" value="1"/>
</dbReference>
<dbReference type="Gene3D" id="2.40.50.100">
    <property type="match status" value="1"/>
</dbReference>
<dbReference type="HAMAP" id="MF_00539">
    <property type="entry name" value="Ribosomal_bL27"/>
    <property type="match status" value="1"/>
</dbReference>
<dbReference type="InterPro" id="IPR001684">
    <property type="entry name" value="Ribosomal_bL27"/>
</dbReference>
<dbReference type="InterPro" id="IPR018261">
    <property type="entry name" value="Ribosomal_bL27_CS"/>
</dbReference>
<dbReference type="NCBIfam" id="TIGR00062">
    <property type="entry name" value="L27"/>
    <property type="match status" value="1"/>
</dbReference>
<dbReference type="PANTHER" id="PTHR15893:SF0">
    <property type="entry name" value="LARGE RIBOSOMAL SUBUNIT PROTEIN BL27M"/>
    <property type="match status" value="1"/>
</dbReference>
<dbReference type="PANTHER" id="PTHR15893">
    <property type="entry name" value="RIBOSOMAL PROTEIN L27"/>
    <property type="match status" value="1"/>
</dbReference>
<dbReference type="Pfam" id="PF01016">
    <property type="entry name" value="Ribosomal_L27"/>
    <property type="match status" value="1"/>
</dbReference>
<dbReference type="PRINTS" id="PR00063">
    <property type="entry name" value="RIBOSOMALL27"/>
</dbReference>
<dbReference type="SUPFAM" id="SSF110324">
    <property type="entry name" value="Ribosomal L27 protein-like"/>
    <property type="match status" value="1"/>
</dbReference>
<dbReference type="PROSITE" id="PS00831">
    <property type="entry name" value="RIBOSOMAL_L27"/>
    <property type="match status" value="1"/>
</dbReference>
<accession>Q4K5T7</accession>
<comment type="similarity">
    <text evidence="1">Belongs to the bacterial ribosomal protein bL27 family.</text>
</comment>
<protein>
    <recommendedName>
        <fullName evidence="1">Large ribosomal subunit protein bL27</fullName>
    </recommendedName>
    <alternativeName>
        <fullName evidence="2">50S ribosomal protein L27</fullName>
    </alternativeName>
</protein>
<feature type="chain" id="PRO_1000017560" description="Large ribosomal subunit protein bL27">
    <location>
        <begin position="1"/>
        <end position="85"/>
    </location>
</feature>